<accession>V5TF61</accession>
<sequence>MNESTMNTKNSEQAILNSEYYETQEISHEIKTVNASVQSSILKDTNTYLTEATFNLPDYLAQRREKVEAALESSITSGYPEKLYKSMRYSLMAGGKRLRPILCLASCELSGGVLEMAMPTACALEMLHTMSLMHDDLPALDNDDYRRGKLTNHKVYGENIAILAGDALLPYAFEYIVVQTKGVPADRLLRVIGQLSHAVGAAGLAGGQVADLESEKLQNIDLATLNFIHSHKTGALLEACVVSGALLVGANDEVLWRLSRYARNVGLAFQIIDDVLDVIATKEQLGKTPGKDEKAQKATYPSLLGINESRYQAQKLIEEAKKELAPFEEKAIPLISLADYIITRTH</sequence>
<organism>
    <name type="scientific">Fischerella ambigua (strain UTEX 1903)</name>
    <dbReference type="NCBI Taxonomy" id="230521"/>
    <lineage>
        <taxon>Bacteria</taxon>
        <taxon>Bacillati</taxon>
        <taxon>Cyanobacteriota</taxon>
        <taxon>Cyanophyceae</taxon>
        <taxon>Nostocales</taxon>
        <taxon>Hapalosiphonaceae</taxon>
        <taxon>Fischerella</taxon>
    </lineage>
</organism>
<comment type="function">
    <text evidence="2">Prenyltransferase involved in the biosynthesis of ambiguines, a family of hapalindole-type alkaloids (PubMed:24180436). Catalyzes the addition of isopentenyl diphosphate (IPP) onto dimethylallyl diphosphate (DMAPP) to form geranyl pyrophosphate (GPP) (PubMed:24180436). Cannot use farnesyl diphosphate (FPP) or geranylgeranyl diphosphate (GGPP) (PubMed:24180436).</text>
</comment>
<comment type="catalytic activity">
    <reaction evidence="2">
        <text>isopentenyl diphosphate + dimethylallyl diphosphate = (2E)-geranyl diphosphate + diphosphate</text>
        <dbReference type="Rhea" id="RHEA:22408"/>
        <dbReference type="ChEBI" id="CHEBI:33019"/>
        <dbReference type="ChEBI" id="CHEBI:57623"/>
        <dbReference type="ChEBI" id="CHEBI:58057"/>
        <dbReference type="ChEBI" id="CHEBI:128769"/>
        <dbReference type="EC" id="2.5.1.1"/>
    </reaction>
    <physiologicalReaction direction="left-to-right" evidence="2">
        <dbReference type="Rhea" id="RHEA:22409"/>
    </physiologicalReaction>
</comment>
<comment type="cofactor">
    <cofactor evidence="1">
        <name>Mg(2+)</name>
        <dbReference type="ChEBI" id="CHEBI:18420"/>
    </cofactor>
    <text evidence="1">Binds 2 Mg(2+) ions per subunit.</text>
</comment>
<comment type="pathway">
    <text evidence="5">Isoprenoid biosynthesis; geranyl diphosphate biosynthesis; geranyl diphosphate from dimethylallyl diphosphate and isopentenyl diphosphate: step 1/1.</text>
</comment>
<comment type="similarity">
    <text evidence="5">Belongs to the FPP/GGPP synthase family.</text>
</comment>
<proteinExistence type="evidence at protein level"/>
<name>AMBP2_FISAU</name>
<feature type="chain" id="PRO_0000460749" description="Dimethylallyltranstransferase">
    <location>
        <begin position="1"/>
        <end position="346"/>
    </location>
</feature>
<feature type="binding site" evidence="1">
    <location>
        <position position="96"/>
    </location>
    <ligand>
        <name>isopentenyl diphosphate</name>
        <dbReference type="ChEBI" id="CHEBI:128769"/>
    </ligand>
</feature>
<feature type="binding site" evidence="1">
    <location>
        <position position="99"/>
    </location>
    <ligand>
        <name>isopentenyl diphosphate</name>
        <dbReference type="ChEBI" id="CHEBI:128769"/>
    </ligand>
</feature>
<feature type="binding site" evidence="1">
    <location>
        <position position="128"/>
    </location>
    <ligand>
        <name>isopentenyl diphosphate</name>
        <dbReference type="ChEBI" id="CHEBI:128769"/>
    </ligand>
</feature>
<feature type="binding site" evidence="1">
    <location>
        <position position="135"/>
    </location>
    <ligand>
        <name>Mg(2+)</name>
        <dbReference type="ChEBI" id="CHEBI:18420"/>
        <label>1</label>
    </ligand>
</feature>
<feature type="binding site" evidence="1">
    <location>
        <position position="135"/>
    </location>
    <ligand>
        <name>Mg(2+)</name>
        <dbReference type="ChEBI" id="CHEBI:18420"/>
        <label>2</label>
    </ligand>
</feature>
<feature type="binding site" evidence="1">
    <location>
        <position position="141"/>
    </location>
    <ligand>
        <name>Mg(2+)</name>
        <dbReference type="ChEBI" id="CHEBI:18420"/>
        <label>1</label>
    </ligand>
</feature>
<feature type="binding site" evidence="1">
    <location>
        <position position="141"/>
    </location>
    <ligand>
        <name>Mg(2+)</name>
        <dbReference type="ChEBI" id="CHEBI:18420"/>
        <label>2</label>
    </ligand>
</feature>
<feature type="binding site" evidence="1">
    <location>
        <position position="147"/>
    </location>
    <ligand>
        <name>isopentenyl diphosphate</name>
        <dbReference type="ChEBI" id="CHEBI:128769"/>
    </ligand>
</feature>
<keyword id="KW-0414">Isoprene biosynthesis</keyword>
<keyword id="KW-0460">Magnesium</keyword>
<keyword id="KW-0479">Metal-binding</keyword>
<keyword id="KW-0808">Transferase</keyword>
<dbReference type="EC" id="2.5.1.1" evidence="2"/>
<dbReference type="EMBL" id="KF664586">
    <property type="protein sequence ID" value="AHB62766.1"/>
    <property type="molecule type" value="Genomic_DNA"/>
</dbReference>
<dbReference type="EMBL" id="KJ742065">
    <property type="protein sequence ID" value="AIJ28561.1"/>
    <property type="molecule type" value="Genomic_DNA"/>
</dbReference>
<dbReference type="EMBL" id="KX451322">
    <property type="protein sequence ID" value="APB62252.1"/>
    <property type="molecule type" value="Genomic_DNA"/>
</dbReference>
<dbReference type="SMR" id="V5TF61"/>
<dbReference type="UniPathway" id="UPA00259">
    <property type="reaction ID" value="UER00368"/>
</dbReference>
<dbReference type="GO" id="GO:0005737">
    <property type="term" value="C:cytoplasm"/>
    <property type="evidence" value="ECO:0007669"/>
    <property type="project" value="UniProtKB-ARBA"/>
</dbReference>
<dbReference type="GO" id="GO:0046872">
    <property type="term" value="F:metal ion binding"/>
    <property type="evidence" value="ECO:0007669"/>
    <property type="project" value="UniProtKB-KW"/>
</dbReference>
<dbReference type="GO" id="GO:0004659">
    <property type="term" value="F:prenyltransferase activity"/>
    <property type="evidence" value="ECO:0007669"/>
    <property type="project" value="InterPro"/>
</dbReference>
<dbReference type="GO" id="GO:0008299">
    <property type="term" value="P:isoprenoid biosynthetic process"/>
    <property type="evidence" value="ECO:0007669"/>
    <property type="project" value="UniProtKB-KW"/>
</dbReference>
<dbReference type="CDD" id="cd00685">
    <property type="entry name" value="Trans_IPPS_HT"/>
    <property type="match status" value="1"/>
</dbReference>
<dbReference type="FunFam" id="1.10.600.10:FF:000001">
    <property type="entry name" value="Geranylgeranyl diphosphate synthase"/>
    <property type="match status" value="1"/>
</dbReference>
<dbReference type="Gene3D" id="1.10.600.10">
    <property type="entry name" value="Farnesyl Diphosphate Synthase"/>
    <property type="match status" value="1"/>
</dbReference>
<dbReference type="InterPro" id="IPR054848">
    <property type="entry name" value="GGPPSyn_CRT-like"/>
</dbReference>
<dbReference type="InterPro" id="IPR008949">
    <property type="entry name" value="Isoprenoid_synthase_dom_sf"/>
</dbReference>
<dbReference type="InterPro" id="IPR000092">
    <property type="entry name" value="Polyprenyl_synt"/>
</dbReference>
<dbReference type="InterPro" id="IPR033749">
    <property type="entry name" value="Polyprenyl_synt_CS"/>
</dbReference>
<dbReference type="InterPro" id="IPR053378">
    <property type="entry name" value="Prenyl_diphosphate_synthase"/>
</dbReference>
<dbReference type="NCBIfam" id="NF045485">
    <property type="entry name" value="FPPsyn"/>
    <property type="match status" value="1"/>
</dbReference>
<dbReference type="NCBIfam" id="NF045685">
    <property type="entry name" value="GGPPSynCrtE"/>
    <property type="match status" value="1"/>
</dbReference>
<dbReference type="PANTHER" id="PTHR43281">
    <property type="entry name" value="FARNESYL DIPHOSPHATE SYNTHASE"/>
    <property type="match status" value="1"/>
</dbReference>
<dbReference type="PANTHER" id="PTHR43281:SF1">
    <property type="entry name" value="FARNESYL DIPHOSPHATE SYNTHASE"/>
    <property type="match status" value="1"/>
</dbReference>
<dbReference type="Pfam" id="PF00348">
    <property type="entry name" value="polyprenyl_synt"/>
    <property type="match status" value="1"/>
</dbReference>
<dbReference type="SFLD" id="SFLDS00005">
    <property type="entry name" value="Isoprenoid_Synthase_Type_I"/>
    <property type="match status" value="1"/>
</dbReference>
<dbReference type="SFLD" id="SFLDG01017">
    <property type="entry name" value="Polyprenyl_Transferase_Like"/>
    <property type="match status" value="1"/>
</dbReference>
<dbReference type="SUPFAM" id="SSF48576">
    <property type="entry name" value="Terpenoid synthases"/>
    <property type="match status" value="1"/>
</dbReference>
<dbReference type="PROSITE" id="PS00723">
    <property type="entry name" value="POLYPRENYL_SYNTHASE_1"/>
    <property type="match status" value="1"/>
</dbReference>
<dbReference type="PROSITE" id="PS00444">
    <property type="entry name" value="POLYPRENYL_SYNTHASE_2"/>
    <property type="match status" value="1"/>
</dbReference>
<evidence type="ECO:0000250" key="1">
    <source>
        <dbReference type="UniProtKB" id="P22939"/>
    </source>
</evidence>
<evidence type="ECO:0000269" key="2">
    <source>
    </source>
</evidence>
<evidence type="ECO:0000303" key="3">
    <source>
    </source>
</evidence>
<evidence type="ECO:0000303" key="4">
    <source>
    </source>
</evidence>
<evidence type="ECO:0000305" key="5"/>
<evidence type="ECO:0000312" key="6">
    <source>
        <dbReference type="EMBL" id="AHB62766.1"/>
    </source>
</evidence>
<evidence type="ECO:0000312" key="7">
    <source>
        <dbReference type="EMBL" id="AIJ28561.1"/>
    </source>
</evidence>
<evidence type="ECO:0000312" key="8">
    <source>
        <dbReference type="EMBL" id="APB62252.1"/>
    </source>
</evidence>
<protein>
    <recommendedName>
        <fullName evidence="3">Dimethylallyltranstransferase</fullName>
        <ecNumber evidence="2">2.5.1.1</ecNumber>
    </recommendedName>
    <alternativeName>
        <fullName evidence="3">Geranyl diphosphate synthase</fullName>
        <shortName evidence="3">GPP synthase</shortName>
    </alternativeName>
</protein>
<gene>
    <name evidence="3" type="primary">ambP2</name>
    <name evidence="4" type="synonym">famE2</name>
</gene>
<reference evidence="6" key="1">
    <citation type="journal article" date="2014" name="ACS Chem. Biol.">
        <title>Biosynthesis of ambiguine indole alkaloids in cyanobacterium Fischerella ambigua.</title>
        <authorList>
            <person name="Hillwig M.L."/>
            <person name="Zhu Q."/>
            <person name="Liu X."/>
        </authorList>
    </citation>
    <scope>NUCLEOTIDE SEQUENCE [GENOMIC DNA]</scope>
    <scope>FUNCTION</scope>
    <scope>CATALYTIC ACTIVITY</scope>
    <source>
        <strain>UTEX 1903</strain>
    </source>
</reference>
<reference evidence="7" key="2">
    <citation type="journal article" date="2014" name="BMC Microbiol.">
        <title>Comparative analysis of hapalindole, ambiguine and welwitindolinone gene clusters and reconstitution of indole-isonitrile biosynthesis from cyanobacteria.</title>
        <authorList>
            <person name="Micallef M.L."/>
            <person name="Sharma D."/>
            <person name="Bunn B.M."/>
            <person name="Gerwick L."/>
            <person name="Viswanathan R."/>
            <person name="Moffitt M.C."/>
        </authorList>
    </citation>
    <scope>NUCLEOTIDE SEQUENCE [GENOMIC DNA]</scope>
    <source>
        <strain>UTEX 1903</strain>
    </source>
</reference>
<reference evidence="8" key="3">
    <citation type="journal article" date="2015" name="J. Am. Chem. Soc.">
        <title>Hapalindole/ambiguine biogenesis is mediated by a cope rearrangement, C-C bond-forming cascade.</title>
        <authorList>
            <person name="Li S."/>
            <person name="Lowell A.N."/>
            <person name="Yu F."/>
            <person name="Raveh A."/>
            <person name="Newmister S.A."/>
            <person name="Bair N."/>
            <person name="Schaub J.M."/>
            <person name="Williams R.M."/>
            <person name="Sherman D.H."/>
        </authorList>
    </citation>
    <scope>NUCLEOTIDE SEQUENCE [GENOMIC DNA]</scope>
    <source>
        <strain>UTEX 1903</strain>
    </source>
</reference>